<sequence length="84" mass="10053">MARENKKELIGKVVSDKMSKTVVVEIVQRKMHPIYHKYLKVSRRVKAHDEREESKLGDKVKIVESRPISKEKRWRLIEILERSK</sequence>
<evidence type="ECO:0000255" key="1">
    <source>
        <dbReference type="HAMAP-Rule" id="MF_01345"/>
    </source>
</evidence>
<evidence type="ECO:0000305" key="2"/>
<comment type="function">
    <text evidence="1">One of the primary rRNA binding proteins, it binds specifically to the 5'-end of 16S ribosomal RNA.</text>
</comment>
<comment type="subunit">
    <text evidence="1">Part of the 30S ribosomal subunit.</text>
</comment>
<comment type="similarity">
    <text evidence="1">Belongs to the universal ribosomal protein uS17 family.</text>
</comment>
<dbReference type="EMBL" id="CP000976">
    <property type="protein sequence ID" value="ACH93431.1"/>
    <property type="molecule type" value="Genomic_DNA"/>
</dbReference>
<dbReference type="RefSeq" id="WP_012538241.1">
    <property type="nucleotide sequence ID" value="NC_011229.1"/>
</dbReference>
<dbReference type="SMR" id="B5RM45"/>
<dbReference type="STRING" id="412419.BDU_490"/>
<dbReference type="KEGG" id="bdu:BDU_490"/>
<dbReference type="eggNOG" id="COG0186">
    <property type="taxonomic scope" value="Bacteria"/>
</dbReference>
<dbReference type="HOGENOM" id="CLU_073626_1_0_12"/>
<dbReference type="OrthoDB" id="9811714at2"/>
<dbReference type="Proteomes" id="UP000000611">
    <property type="component" value="Chromosome"/>
</dbReference>
<dbReference type="GO" id="GO:0022627">
    <property type="term" value="C:cytosolic small ribosomal subunit"/>
    <property type="evidence" value="ECO:0007669"/>
    <property type="project" value="TreeGrafter"/>
</dbReference>
<dbReference type="GO" id="GO:0019843">
    <property type="term" value="F:rRNA binding"/>
    <property type="evidence" value="ECO:0007669"/>
    <property type="project" value="UniProtKB-UniRule"/>
</dbReference>
<dbReference type="GO" id="GO:0003735">
    <property type="term" value="F:structural constituent of ribosome"/>
    <property type="evidence" value="ECO:0007669"/>
    <property type="project" value="InterPro"/>
</dbReference>
<dbReference type="GO" id="GO:0006412">
    <property type="term" value="P:translation"/>
    <property type="evidence" value="ECO:0007669"/>
    <property type="project" value="UniProtKB-UniRule"/>
</dbReference>
<dbReference type="CDD" id="cd00364">
    <property type="entry name" value="Ribosomal_uS17"/>
    <property type="match status" value="1"/>
</dbReference>
<dbReference type="Gene3D" id="2.40.50.140">
    <property type="entry name" value="Nucleic acid-binding proteins"/>
    <property type="match status" value="1"/>
</dbReference>
<dbReference type="HAMAP" id="MF_01345_B">
    <property type="entry name" value="Ribosomal_uS17_B"/>
    <property type="match status" value="1"/>
</dbReference>
<dbReference type="InterPro" id="IPR012340">
    <property type="entry name" value="NA-bd_OB-fold"/>
</dbReference>
<dbReference type="InterPro" id="IPR000266">
    <property type="entry name" value="Ribosomal_uS17"/>
</dbReference>
<dbReference type="InterPro" id="IPR019984">
    <property type="entry name" value="Ribosomal_uS17_bact/chlr"/>
</dbReference>
<dbReference type="InterPro" id="IPR019979">
    <property type="entry name" value="Ribosomal_uS17_CS"/>
</dbReference>
<dbReference type="NCBIfam" id="NF004123">
    <property type="entry name" value="PRK05610.1"/>
    <property type="match status" value="1"/>
</dbReference>
<dbReference type="NCBIfam" id="TIGR03635">
    <property type="entry name" value="uS17_bact"/>
    <property type="match status" value="1"/>
</dbReference>
<dbReference type="PANTHER" id="PTHR10744">
    <property type="entry name" value="40S RIBOSOMAL PROTEIN S11 FAMILY MEMBER"/>
    <property type="match status" value="1"/>
</dbReference>
<dbReference type="PANTHER" id="PTHR10744:SF1">
    <property type="entry name" value="SMALL RIBOSOMAL SUBUNIT PROTEIN US17M"/>
    <property type="match status" value="1"/>
</dbReference>
<dbReference type="Pfam" id="PF00366">
    <property type="entry name" value="Ribosomal_S17"/>
    <property type="match status" value="1"/>
</dbReference>
<dbReference type="PRINTS" id="PR00973">
    <property type="entry name" value="RIBOSOMALS17"/>
</dbReference>
<dbReference type="SUPFAM" id="SSF50249">
    <property type="entry name" value="Nucleic acid-binding proteins"/>
    <property type="match status" value="1"/>
</dbReference>
<dbReference type="PROSITE" id="PS00056">
    <property type="entry name" value="RIBOSOMAL_S17"/>
    <property type="match status" value="1"/>
</dbReference>
<proteinExistence type="inferred from homology"/>
<organism>
    <name type="scientific">Borrelia duttonii (strain Ly)</name>
    <dbReference type="NCBI Taxonomy" id="412419"/>
    <lineage>
        <taxon>Bacteria</taxon>
        <taxon>Pseudomonadati</taxon>
        <taxon>Spirochaetota</taxon>
        <taxon>Spirochaetia</taxon>
        <taxon>Spirochaetales</taxon>
        <taxon>Borreliaceae</taxon>
        <taxon>Borrelia</taxon>
    </lineage>
</organism>
<gene>
    <name evidence="1" type="primary">rpsQ</name>
    <name type="ordered locus">BDU_490</name>
</gene>
<reference key="1">
    <citation type="journal article" date="2008" name="PLoS Genet.">
        <title>The genome of Borrelia recurrentis, the agent of deadly louse-borne relapsing fever, is a degraded subset of tick-borne Borrelia duttonii.</title>
        <authorList>
            <person name="Lescot M."/>
            <person name="Audic S."/>
            <person name="Robert C."/>
            <person name="Nguyen T.T."/>
            <person name="Blanc G."/>
            <person name="Cutler S.J."/>
            <person name="Wincker P."/>
            <person name="Couloux A."/>
            <person name="Claverie J.-M."/>
            <person name="Raoult D."/>
            <person name="Drancourt M."/>
        </authorList>
    </citation>
    <scope>NUCLEOTIDE SEQUENCE [LARGE SCALE GENOMIC DNA]</scope>
    <source>
        <strain>Ly</strain>
    </source>
</reference>
<protein>
    <recommendedName>
        <fullName evidence="1">Small ribosomal subunit protein uS17</fullName>
    </recommendedName>
    <alternativeName>
        <fullName evidence="2">30S ribosomal protein S17</fullName>
    </alternativeName>
</protein>
<feature type="chain" id="PRO_1000143225" description="Small ribosomal subunit protein uS17">
    <location>
        <begin position="1"/>
        <end position="84"/>
    </location>
</feature>
<name>RS17_BORDL</name>
<accession>B5RM45</accession>
<keyword id="KW-0687">Ribonucleoprotein</keyword>
<keyword id="KW-0689">Ribosomal protein</keyword>
<keyword id="KW-0694">RNA-binding</keyword>
<keyword id="KW-0699">rRNA-binding</keyword>